<gene>
    <name evidence="1" type="primary">xseB</name>
    <name type="ordered locus">APL_0806</name>
</gene>
<comment type="function">
    <text evidence="1">Bidirectionally degrades single-stranded DNA into large acid-insoluble oligonucleotides, which are then degraded further into small acid-soluble oligonucleotides.</text>
</comment>
<comment type="catalytic activity">
    <reaction evidence="1">
        <text>Exonucleolytic cleavage in either 5'- to 3'- or 3'- to 5'-direction to yield nucleoside 5'-phosphates.</text>
        <dbReference type="EC" id="3.1.11.6"/>
    </reaction>
</comment>
<comment type="subunit">
    <text evidence="1">Heterooligomer composed of large and small subunits.</text>
</comment>
<comment type="subcellular location">
    <subcellularLocation>
        <location evidence="1">Cytoplasm</location>
    </subcellularLocation>
</comment>
<comment type="similarity">
    <text evidence="1">Belongs to the XseB family.</text>
</comment>
<organism>
    <name type="scientific">Actinobacillus pleuropneumoniae serotype 5b (strain L20)</name>
    <dbReference type="NCBI Taxonomy" id="416269"/>
    <lineage>
        <taxon>Bacteria</taxon>
        <taxon>Pseudomonadati</taxon>
        <taxon>Pseudomonadota</taxon>
        <taxon>Gammaproteobacteria</taxon>
        <taxon>Pasteurellales</taxon>
        <taxon>Pasteurellaceae</taxon>
        <taxon>Actinobacillus</taxon>
    </lineage>
</organism>
<evidence type="ECO:0000255" key="1">
    <source>
        <dbReference type="HAMAP-Rule" id="MF_00337"/>
    </source>
</evidence>
<dbReference type="EC" id="3.1.11.6" evidence="1"/>
<dbReference type="EMBL" id="CP000569">
    <property type="protein sequence ID" value="ABN73902.1"/>
    <property type="molecule type" value="Genomic_DNA"/>
</dbReference>
<dbReference type="RefSeq" id="WP_005597261.1">
    <property type="nucleotide sequence ID" value="NC_009053.1"/>
</dbReference>
<dbReference type="SMR" id="A3N0G6"/>
<dbReference type="STRING" id="416269.APL_0806"/>
<dbReference type="EnsemblBacteria" id="ABN73902">
    <property type="protein sequence ID" value="ABN73902"/>
    <property type="gene ID" value="APL_0806"/>
</dbReference>
<dbReference type="GeneID" id="48598991"/>
<dbReference type="KEGG" id="apl:APL_0806"/>
<dbReference type="eggNOG" id="COG1722">
    <property type="taxonomic scope" value="Bacteria"/>
</dbReference>
<dbReference type="HOGENOM" id="CLU_145918_3_3_6"/>
<dbReference type="Proteomes" id="UP000001432">
    <property type="component" value="Chromosome"/>
</dbReference>
<dbReference type="GO" id="GO:0005829">
    <property type="term" value="C:cytosol"/>
    <property type="evidence" value="ECO:0007669"/>
    <property type="project" value="TreeGrafter"/>
</dbReference>
<dbReference type="GO" id="GO:0009318">
    <property type="term" value="C:exodeoxyribonuclease VII complex"/>
    <property type="evidence" value="ECO:0007669"/>
    <property type="project" value="InterPro"/>
</dbReference>
<dbReference type="GO" id="GO:0008855">
    <property type="term" value="F:exodeoxyribonuclease VII activity"/>
    <property type="evidence" value="ECO:0007669"/>
    <property type="project" value="UniProtKB-UniRule"/>
</dbReference>
<dbReference type="GO" id="GO:0006308">
    <property type="term" value="P:DNA catabolic process"/>
    <property type="evidence" value="ECO:0007669"/>
    <property type="project" value="UniProtKB-UniRule"/>
</dbReference>
<dbReference type="Gene3D" id="1.10.287.1040">
    <property type="entry name" value="Exonuclease VII, small subunit"/>
    <property type="match status" value="1"/>
</dbReference>
<dbReference type="HAMAP" id="MF_00337">
    <property type="entry name" value="Exonuc_7_S"/>
    <property type="match status" value="1"/>
</dbReference>
<dbReference type="InterPro" id="IPR003761">
    <property type="entry name" value="Exonuc_VII_S"/>
</dbReference>
<dbReference type="InterPro" id="IPR037004">
    <property type="entry name" value="Exonuc_VII_ssu_sf"/>
</dbReference>
<dbReference type="NCBIfam" id="NF002137">
    <property type="entry name" value="PRK00977.1-1"/>
    <property type="match status" value="1"/>
</dbReference>
<dbReference type="NCBIfam" id="NF002140">
    <property type="entry name" value="PRK00977.1-4"/>
    <property type="match status" value="1"/>
</dbReference>
<dbReference type="NCBIfam" id="TIGR01280">
    <property type="entry name" value="xseB"/>
    <property type="match status" value="1"/>
</dbReference>
<dbReference type="PANTHER" id="PTHR34137">
    <property type="entry name" value="EXODEOXYRIBONUCLEASE 7 SMALL SUBUNIT"/>
    <property type="match status" value="1"/>
</dbReference>
<dbReference type="PANTHER" id="PTHR34137:SF1">
    <property type="entry name" value="EXODEOXYRIBONUCLEASE 7 SMALL SUBUNIT"/>
    <property type="match status" value="1"/>
</dbReference>
<dbReference type="Pfam" id="PF02609">
    <property type="entry name" value="Exonuc_VII_S"/>
    <property type="match status" value="1"/>
</dbReference>
<dbReference type="PIRSF" id="PIRSF006488">
    <property type="entry name" value="Exonuc_VII_S"/>
    <property type="match status" value="1"/>
</dbReference>
<dbReference type="SUPFAM" id="SSF116842">
    <property type="entry name" value="XseB-like"/>
    <property type="match status" value="1"/>
</dbReference>
<name>EX7S_ACTP2</name>
<sequence>MAKKPTQDFESTLKELEAIVSHLETGELPLEEALNEFETAVKLVQQGQERLQKAEQRIQILLNKNDQAELSDYE</sequence>
<feature type="chain" id="PRO_0000303683" description="Exodeoxyribonuclease 7 small subunit">
    <location>
        <begin position="1"/>
        <end position="74"/>
    </location>
</feature>
<reference key="1">
    <citation type="journal article" date="2008" name="J. Bacteriol.">
        <title>The complete genome sequence of Actinobacillus pleuropneumoniae L20 (serotype 5b).</title>
        <authorList>
            <person name="Foote S.J."/>
            <person name="Bosse J.T."/>
            <person name="Bouevitch A.B."/>
            <person name="Langford P.R."/>
            <person name="Young N.M."/>
            <person name="Nash J.H.E."/>
        </authorList>
    </citation>
    <scope>NUCLEOTIDE SEQUENCE [LARGE SCALE GENOMIC DNA]</scope>
    <source>
        <strain>L20</strain>
    </source>
</reference>
<keyword id="KW-0963">Cytoplasm</keyword>
<keyword id="KW-0269">Exonuclease</keyword>
<keyword id="KW-0378">Hydrolase</keyword>
<keyword id="KW-0540">Nuclease</keyword>
<keyword id="KW-1185">Reference proteome</keyword>
<accession>A3N0G6</accession>
<protein>
    <recommendedName>
        <fullName evidence="1">Exodeoxyribonuclease 7 small subunit</fullName>
        <ecNumber evidence="1">3.1.11.6</ecNumber>
    </recommendedName>
    <alternativeName>
        <fullName evidence="1">Exodeoxyribonuclease VII small subunit</fullName>
        <shortName evidence="1">Exonuclease VII small subunit</shortName>
    </alternativeName>
</protein>
<proteinExistence type="inferred from homology"/>